<accession>Q5B9F2</accession>
<accession>C8VJG1</accession>
<reference key="1">
    <citation type="journal article" date="2005" name="Nature">
        <title>Sequencing of Aspergillus nidulans and comparative analysis with A. fumigatus and A. oryzae.</title>
        <authorList>
            <person name="Galagan J.E."/>
            <person name="Calvo S.E."/>
            <person name="Cuomo C."/>
            <person name="Ma L.-J."/>
            <person name="Wortman J.R."/>
            <person name="Batzoglou S."/>
            <person name="Lee S.-I."/>
            <person name="Bastuerkmen M."/>
            <person name="Spevak C.C."/>
            <person name="Clutterbuck J."/>
            <person name="Kapitonov V."/>
            <person name="Jurka J."/>
            <person name="Scazzocchio C."/>
            <person name="Farman M.L."/>
            <person name="Butler J."/>
            <person name="Purcell S."/>
            <person name="Harris S."/>
            <person name="Braus G.H."/>
            <person name="Draht O."/>
            <person name="Busch S."/>
            <person name="D'Enfert C."/>
            <person name="Bouchier C."/>
            <person name="Goldman G.H."/>
            <person name="Bell-Pedersen D."/>
            <person name="Griffiths-Jones S."/>
            <person name="Doonan J.H."/>
            <person name="Yu J."/>
            <person name="Vienken K."/>
            <person name="Pain A."/>
            <person name="Freitag M."/>
            <person name="Selker E.U."/>
            <person name="Archer D.B."/>
            <person name="Penalva M.A."/>
            <person name="Oakley B.R."/>
            <person name="Momany M."/>
            <person name="Tanaka T."/>
            <person name="Kumagai T."/>
            <person name="Asai K."/>
            <person name="Machida M."/>
            <person name="Nierman W.C."/>
            <person name="Denning D.W."/>
            <person name="Caddick M.X."/>
            <person name="Hynes M."/>
            <person name="Paoletti M."/>
            <person name="Fischer R."/>
            <person name="Miller B.L."/>
            <person name="Dyer P.S."/>
            <person name="Sachs M.S."/>
            <person name="Osmani S.A."/>
            <person name="Birren B.W."/>
        </authorList>
    </citation>
    <scope>NUCLEOTIDE SEQUENCE [LARGE SCALE GENOMIC DNA]</scope>
    <source>
        <strain>FGSC A4 / ATCC 38163 / CBS 112.46 / NRRL 194 / M139</strain>
    </source>
</reference>
<reference key="2">
    <citation type="journal article" date="2009" name="Fungal Genet. Biol.">
        <title>The 2008 update of the Aspergillus nidulans genome annotation: a community effort.</title>
        <authorList>
            <person name="Wortman J.R."/>
            <person name="Gilsenan J.M."/>
            <person name="Joardar V."/>
            <person name="Deegan J."/>
            <person name="Clutterbuck J."/>
            <person name="Andersen M.R."/>
            <person name="Archer D."/>
            <person name="Bencina M."/>
            <person name="Braus G."/>
            <person name="Coutinho P."/>
            <person name="von Dohren H."/>
            <person name="Doonan J."/>
            <person name="Driessen A.J."/>
            <person name="Durek P."/>
            <person name="Espeso E."/>
            <person name="Fekete E."/>
            <person name="Flipphi M."/>
            <person name="Estrada C.G."/>
            <person name="Geysens S."/>
            <person name="Goldman G."/>
            <person name="de Groot P.W."/>
            <person name="Hansen K."/>
            <person name="Harris S.D."/>
            <person name="Heinekamp T."/>
            <person name="Helmstaedt K."/>
            <person name="Henrissat B."/>
            <person name="Hofmann G."/>
            <person name="Homan T."/>
            <person name="Horio T."/>
            <person name="Horiuchi H."/>
            <person name="James S."/>
            <person name="Jones M."/>
            <person name="Karaffa L."/>
            <person name="Karanyi Z."/>
            <person name="Kato M."/>
            <person name="Keller N."/>
            <person name="Kelly D.E."/>
            <person name="Kiel J.A."/>
            <person name="Kim J.M."/>
            <person name="van der Klei I.J."/>
            <person name="Klis F.M."/>
            <person name="Kovalchuk A."/>
            <person name="Krasevec N."/>
            <person name="Kubicek C.P."/>
            <person name="Liu B."/>
            <person name="Maccabe A."/>
            <person name="Meyer V."/>
            <person name="Mirabito P."/>
            <person name="Miskei M."/>
            <person name="Mos M."/>
            <person name="Mullins J."/>
            <person name="Nelson D.R."/>
            <person name="Nielsen J."/>
            <person name="Oakley B.R."/>
            <person name="Osmani S.A."/>
            <person name="Pakula T."/>
            <person name="Paszewski A."/>
            <person name="Paulsen I."/>
            <person name="Pilsyk S."/>
            <person name="Pocsi I."/>
            <person name="Punt P.J."/>
            <person name="Ram A.F."/>
            <person name="Ren Q."/>
            <person name="Robellet X."/>
            <person name="Robson G."/>
            <person name="Seiboth B."/>
            <person name="van Solingen P."/>
            <person name="Specht T."/>
            <person name="Sun J."/>
            <person name="Taheri-Talesh N."/>
            <person name="Takeshita N."/>
            <person name="Ussery D."/>
            <person name="vanKuyk P.A."/>
            <person name="Visser H."/>
            <person name="van de Vondervoort P.J."/>
            <person name="de Vries R.P."/>
            <person name="Walton J."/>
            <person name="Xiang X."/>
            <person name="Xiong Y."/>
            <person name="Zeng A.P."/>
            <person name="Brandt B.W."/>
            <person name="Cornell M.J."/>
            <person name="van den Hondel C.A."/>
            <person name="Visser J."/>
            <person name="Oliver S.G."/>
            <person name="Turner G."/>
        </authorList>
    </citation>
    <scope>GENOME REANNOTATION</scope>
    <source>
        <strain>FGSC A4 / ATCC 38163 / CBS 112.46 / NRRL 194 / M139</strain>
    </source>
</reference>
<reference key="3">
    <citation type="journal article" date="2014" name="BMC Genomics">
        <title>Elucidating how the saprophytic fungus Aspergillus nidulans uses the plant polyester suberin as carbon source.</title>
        <authorList>
            <person name="Martins I."/>
            <person name="Hartmann D.O."/>
            <person name="Alves P.C."/>
            <person name="Martins C."/>
            <person name="Garcia H."/>
            <person name="Leclercq C.C."/>
            <person name="Ferreira R."/>
            <person name="He J."/>
            <person name="Renaut J."/>
            <person name="Becker J.D."/>
            <person name="Silva Pereira C."/>
        </authorList>
    </citation>
    <scope>SUBCELLULAR LOCATION</scope>
</reference>
<gene>
    <name type="primary">bglL</name>
    <name type="ORF">AN2828</name>
</gene>
<organism>
    <name type="scientific">Emericella nidulans (strain FGSC A4 / ATCC 38163 / CBS 112.46 / NRRL 194 / M139)</name>
    <name type="common">Aspergillus nidulans</name>
    <dbReference type="NCBI Taxonomy" id="227321"/>
    <lineage>
        <taxon>Eukaryota</taxon>
        <taxon>Fungi</taxon>
        <taxon>Dikarya</taxon>
        <taxon>Ascomycota</taxon>
        <taxon>Pezizomycotina</taxon>
        <taxon>Eurotiomycetes</taxon>
        <taxon>Eurotiomycetidae</taxon>
        <taxon>Eurotiales</taxon>
        <taxon>Aspergillaceae</taxon>
        <taxon>Aspergillus</taxon>
        <taxon>Aspergillus subgen. Nidulantes</taxon>
    </lineage>
</organism>
<proteinExistence type="inferred from homology"/>
<name>BGLL_EMENI</name>
<feature type="signal peptide" evidence="2">
    <location>
        <begin position="1"/>
        <end position="19"/>
    </location>
</feature>
<feature type="chain" id="PRO_0000394902" description="Probable beta-glucosidase L">
    <location>
        <begin position="20"/>
        <end position="737"/>
    </location>
</feature>
<feature type="active site" evidence="1">
    <location>
        <position position="253"/>
    </location>
</feature>
<feature type="glycosylation site" description="N-linked (GlcNAc...) asparagine" evidence="2">
    <location>
        <position position="225"/>
    </location>
</feature>
<feature type="glycosylation site" description="N-linked (GlcNAc...) asparagine" evidence="2">
    <location>
        <position position="340"/>
    </location>
</feature>
<feature type="glycosylation site" description="N-linked (GlcNAc...) asparagine" evidence="2">
    <location>
        <position position="365"/>
    </location>
</feature>
<feature type="glycosylation site" description="N-linked (GlcNAc...) asparagine" evidence="2">
    <location>
        <position position="608"/>
    </location>
</feature>
<protein>
    <recommendedName>
        <fullName>Probable beta-glucosidase L</fullName>
        <ecNumber>3.2.1.21</ecNumber>
    </recommendedName>
    <alternativeName>
        <fullName>Beta-D-glucoside glucohydrolase L</fullName>
    </alternativeName>
    <alternativeName>
        <fullName>Cellobiase L</fullName>
    </alternativeName>
    <alternativeName>
        <fullName>Gentiobiase L</fullName>
    </alternativeName>
</protein>
<keyword id="KW-0119">Carbohydrate metabolism</keyword>
<keyword id="KW-0136">Cellulose degradation</keyword>
<keyword id="KW-0325">Glycoprotein</keyword>
<keyword id="KW-0326">Glycosidase</keyword>
<keyword id="KW-0378">Hydrolase</keyword>
<keyword id="KW-0624">Polysaccharide degradation</keyword>
<keyword id="KW-1185">Reference proteome</keyword>
<keyword id="KW-0964">Secreted</keyword>
<keyword id="KW-0732">Signal</keyword>
<sequence length="737" mass="77815">MRSLIRSGALNAFLAASLATGQVLTWDEAYTKATSDLSLLSQEEKVGIVTGVTWQGGPCVGNTYEPTSIPYPSLCLQDGPLSVRFANPVTVFPAGINAGATWDRELIRARGVAMGAESRGLGVHVQLGPVAGALGKIPSAGRNWEGFSNDPYLAGIAMAEAIQGMQSSGVQACAKHYLLNEQEYNRDTISSNADDRTIHELYLWPFYDAVKANVASVMCSYNKINGTWACEHDALLNGLLKGELGFKGHVLSDWNAQHSTVQSANTGLDMTMPGSDFSTPPGSIYWGDNLAAAIADGSVPQERLDDMVTRILAAWYLVGQDQGHPPVAFSSWDGGAASVNVTTPEHGELARTIARDSIVLLKNTNGSLPLAKPASLAVIGSDAIVNPDGANACADRGCNKGTLAQGWGSGTAEFPYLVAPLDAIEEKLAGAGTAIITSTTDDATSGAEAAAAAETAIVFITSDSGEGYITVEGHEGDRNNLDPWHNGNLLVQAVARTNTPTIVVLHSVGPVTLETILAEPNVVAVVWAGLPGQESGHALTDVLFGDYAPSGKLPFTIGKSEEDYGADWTTSQVDDFAEGLFIDYRHFDQYGIEPRYEFGFGLSYTSFNYSTLSTSISTTPGPTTGETIVGGPSDLFAPIGTVSAYVANTGHVAGAEVVQLYIGYPDSAPSIPPKQLRGFDKLHLVPGESGIATFELTRRDISYWDVGLQKWVVASGTFEVFVGASSRDIRLTGSFTV</sequence>
<dbReference type="EC" id="3.2.1.21"/>
<dbReference type="EMBL" id="AACD01000051">
    <property type="protein sequence ID" value="EAA63399.1"/>
    <property type="molecule type" value="Genomic_DNA"/>
</dbReference>
<dbReference type="EMBL" id="BN001306">
    <property type="protein sequence ID" value="CBF83924.1"/>
    <property type="molecule type" value="Genomic_DNA"/>
</dbReference>
<dbReference type="RefSeq" id="XP_660432.1">
    <property type="nucleotide sequence ID" value="XM_655340.1"/>
</dbReference>
<dbReference type="SMR" id="Q5B9F2"/>
<dbReference type="STRING" id="227321.Q5B9F2"/>
<dbReference type="CAZy" id="GH3">
    <property type="family name" value="Glycoside Hydrolase Family 3"/>
</dbReference>
<dbReference type="GlyCosmos" id="Q5B9F2">
    <property type="glycosylation" value="4 sites, No reported glycans"/>
</dbReference>
<dbReference type="EnsemblFungi" id="CBF83924">
    <property type="protein sequence ID" value="CBF83924"/>
    <property type="gene ID" value="ANIA_02828"/>
</dbReference>
<dbReference type="KEGG" id="ani:ANIA_02828"/>
<dbReference type="VEuPathDB" id="FungiDB:AN2828"/>
<dbReference type="eggNOG" id="ENOG502QR4D">
    <property type="taxonomic scope" value="Eukaryota"/>
</dbReference>
<dbReference type="HOGENOM" id="CLU_004542_2_3_1"/>
<dbReference type="InParanoid" id="Q5B9F2"/>
<dbReference type="OMA" id="NDMFAHG"/>
<dbReference type="OrthoDB" id="416222at2759"/>
<dbReference type="UniPathway" id="UPA00696"/>
<dbReference type="Proteomes" id="UP000000560">
    <property type="component" value="Chromosome VI"/>
</dbReference>
<dbReference type="GO" id="GO:0005576">
    <property type="term" value="C:extracellular region"/>
    <property type="evidence" value="ECO:0007669"/>
    <property type="project" value="UniProtKB-SubCell"/>
</dbReference>
<dbReference type="GO" id="GO:0008422">
    <property type="term" value="F:beta-glucosidase activity"/>
    <property type="evidence" value="ECO:0000318"/>
    <property type="project" value="GO_Central"/>
</dbReference>
<dbReference type="GO" id="GO:0030245">
    <property type="term" value="P:cellulose catabolic process"/>
    <property type="evidence" value="ECO:0007669"/>
    <property type="project" value="UniProtKB-UniPathway"/>
</dbReference>
<dbReference type="GO" id="GO:0009251">
    <property type="term" value="P:glucan catabolic process"/>
    <property type="evidence" value="ECO:0000318"/>
    <property type="project" value="GO_Central"/>
</dbReference>
<dbReference type="FunFam" id="2.60.40.10:FF:000757">
    <property type="entry name" value="Beta-glucosidase G"/>
    <property type="match status" value="1"/>
</dbReference>
<dbReference type="FunFam" id="3.20.20.300:FF:000002">
    <property type="entry name" value="Probable beta-glucosidase"/>
    <property type="match status" value="1"/>
</dbReference>
<dbReference type="FunFam" id="3.40.50.1700:FF:000003">
    <property type="entry name" value="Probable beta-glucosidase"/>
    <property type="match status" value="1"/>
</dbReference>
<dbReference type="Gene3D" id="3.40.50.1700">
    <property type="entry name" value="Glycoside hydrolase family 3 C-terminal domain"/>
    <property type="match status" value="1"/>
</dbReference>
<dbReference type="Gene3D" id="3.20.20.300">
    <property type="entry name" value="Glycoside hydrolase, family 3, N-terminal domain"/>
    <property type="match status" value="1"/>
</dbReference>
<dbReference type="Gene3D" id="2.60.40.10">
    <property type="entry name" value="Immunoglobulins"/>
    <property type="match status" value="1"/>
</dbReference>
<dbReference type="InterPro" id="IPR050288">
    <property type="entry name" value="Cellulose_deg_GH3"/>
</dbReference>
<dbReference type="InterPro" id="IPR026891">
    <property type="entry name" value="Fn3-like"/>
</dbReference>
<dbReference type="InterPro" id="IPR002772">
    <property type="entry name" value="Glyco_hydro_3_C"/>
</dbReference>
<dbReference type="InterPro" id="IPR036881">
    <property type="entry name" value="Glyco_hydro_3_C_sf"/>
</dbReference>
<dbReference type="InterPro" id="IPR001764">
    <property type="entry name" value="Glyco_hydro_3_N"/>
</dbReference>
<dbReference type="InterPro" id="IPR036962">
    <property type="entry name" value="Glyco_hydro_3_N_sf"/>
</dbReference>
<dbReference type="InterPro" id="IPR017853">
    <property type="entry name" value="Glycoside_hydrolase_SF"/>
</dbReference>
<dbReference type="InterPro" id="IPR013783">
    <property type="entry name" value="Ig-like_fold"/>
</dbReference>
<dbReference type="PANTHER" id="PTHR42715">
    <property type="entry name" value="BETA-GLUCOSIDASE"/>
    <property type="match status" value="1"/>
</dbReference>
<dbReference type="PANTHER" id="PTHR42715:SF28">
    <property type="entry name" value="BETA-GLUCOSIDASE L-RELATED"/>
    <property type="match status" value="1"/>
</dbReference>
<dbReference type="Pfam" id="PF14310">
    <property type="entry name" value="Fn3-like"/>
    <property type="match status" value="1"/>
</dbReference>
<dbReference type="Pfam" id="PF00933">
    <property type="entry name" value="Glyco_hydro_3"/>
    <property type="match status" value="1"/>
</dbReference>
<dbReference type="Pfam" id="PF01915">
    <property type="entry name" value="Glyco_hydro_3_C"/>
    <property type="match status" value="1"/>
</dbReference>
<dbReference type="PRINTS" id="PR00133">
    <property type="entry name" value="GLHYDRLASE3"/>
</dbReference>
<dbReference type="SMART" id="SM01217">
    <property type="entry name" value="Fn3_like"/>
    <property type="match status" value="1"/>
</dbReference>
<dbReference type="SUPFAM" id="SSF51445">
    <property type="entry name" value="(Trans)glycosidases"/>
    <property type="match status" value="1"/>
</dbReference>
<dbReference type="SUPFAM" id="SSF52279">
    <property type="entry name" value="Beta-D-glucan exohydrolase, C-terminal domain"/>
    <property type="match status" value="1"/>
</dbReference>
<comment type="function">
    <text evidence="1">Beta-glucosidases are one of a number of cellulolytic enzymes involved in the degradation of cellulosic biomass. Catalyzes the last step releasing glucose from the inhibitory cellobiose (By similarity).</text>
</comment>
<comment type="catalytic activity">
    <reaction>
        <text>Hydrolysis of terminal, non-reducing beta-D-glucosyl residues with release of beta-D-glucose.</text>
        <dbReference type="EC" id="3.2.1.21"/>
    </reaction>
</comment>
<comment type="pathway">
    <text>Glycan metabolism; cellulose degradation.</text>
</comment>
<comment type="subcellular location">
    <subcellularLocation>
        <location evidence="3">Secreted</location>
    </subcellularLocation>
</comment>
<comment type="similarity">
    <text evidence="4">Belongs to the glycosyl hydrolase 3 family.</text>
</comment>
<evidence type="ECO:0000250" key="1"/>
<evidence type="ECO:0000255" key="2"/>
<evidence type="ECO:0000269" key="3">
    <source>
    </source>
</evidence>
<evidence type="ECO:0000305" key="4"/>